<organism>
    <name type="scientific">Chlamydia caviae (strain ATCC VR-813 / DSM 19441 / 03DC25 / GPIC)</name>
    <name type="common">Chlamydophila caviae</name>
    <dbReference type="NCBI Taxonomy" id="227941"/>
    <lineage>
        <taxon>Bacteria</taxon>
        <taxon>Pseudomonadati</taxon>
        <taxon>Chlamydiota</taxon>
        <taxon>Chlamydiia</taxon>
        <taxon>Chlamydiales</taxon>
        <taxon>Chlamydiaceae</taxon>
        <taxon>Chlamydia/Chlamydophila group</taxon>
        <taxon>Chlamydia</taxon>
    </lineage>
</organism>
<evidence type="ECO:0000250" key="1"/>
<evidence type="ECO:0000255" key="2">
    <source>
        <dbReference type="HAMAP-Rule" id="MF_00100"/>
    </source>
</evidence>
<evidence type="ECO:0000256" key="3">
    <source>
        <dbReference type="SAM" id="MobiDB-lite"/>
    </source>
</evidence>
<feature type="chain" id="PRO_0000137187" description="Translation initiation factor IF-2">
    <location>
        <begin position="1"/>
        <end position="887"/>
    </location>
</feature>
<feature type="domain" description="tr-type G">
    <location>
        <begin position="393"/>
        <end position="562"/>
    </location>
</feature>
<feature type="region of interest" description="Disordered" evidence="3">
    <location>
        <begin position="31"/>
        <end position="87"/>
    </location>
</feature>
<feature type="region of interest" description="Disordered" evidence="3">
    <location>
        <begin position="94"/>
        <end position="113"/>
    </location>
</feature>
<feature type="region of interest" description="Disordered" evidence="3">
    <location>
        <begin position="129"/>
        <end position="285"/>
    </location>
</feature>
<feature type="region of interest" description="G1" evidence="1">
    <location>
        <begin position="402"/>
        <end position="409"/>
    </location>
</feature>
<feature type="region of interest" description="G2" evidence="1">
    <location>
        <begin position="427"/>
        <end position="431"/>
    </location>
</feature>
<feature type="region of interest" description="G3" evidence="1">
    <location>
        <begin position="448"/>
        <end position="451"/>
    </location>
</feature>
<feature type="region of interest" description="G4" evidence="1">
    <location>
        <begin position="502"/>
        <end position="505"/>
    </location>
</feature>
<feature type="region of interest" description="G5" evidence="1">
    <location>
        <begin position="538"/>
        <end position="540"/>
    </location>
</feature>
<feature type="compositionally biased region" description="Basic and acidic residues" evidence="3">
    <location>
        <begin position="42"/>
        <end position="59"/>
    </location>
</feature>
<feature type="compositionally biased region" description="Basic and acidic residues" evidence="3">
    <location>
        <begin position="150"/>
        <end position="171"/>
    </location>
</feature>
<feature type="compositionally biased region" description="Basic and acidic residues" evidence="3">
    <location>
        <begin position="199"/>
        <end position="212"/>
    </location>
</feature>
<feature type="compositionally biased region" description="Low complexity" evidence="3">
    <location>
        <begin position="213"/>
        <end position="223"/>
    </location>
</feature>
<feature type="compositionally biased region" description="Basic and acidic residues" evidence="3">
    <location>
        <begin position="241"/>
        <end position="273"/>
    </location>
</feature>
<feature type="binding site" evidence="2">
    <location>
        <begin position="402"/>
        <end position="409"/>
    </location>
    <ligand>
        <name>GTP</name>
        <dbReference type="ChEBI" id="CHEBI:37565"/>
    </ligand>
</feature>
<feature type="binding site" evidence="2">
    <location>
        <begin position="448"/>
        <end position="452"/>
    </location>
    <ligand>
        <name>GTP</name>
        <dbReference type="ChEBI" id="CHEBI:37565"/>
    </ligand>
</feature>
<feature type="binding site" evidence="2">
    <location>
        <begin position="502"/>
        <end position="505"/>
    </location>
    <ligand>
        <name>GTP</name>
        <dbReference type="ChEBI" id="CHEBI:37565"/>
    </ligand>
</feature>
<sequence length="887" mass="96938">MEKAKLTKNLKLKIKNAQLTKAAGLDKLKQKLAQAGSSETKSSSEKPSTKVPEKIAKEKVVKKKSVVDPGVPTMTEPVSAENSPRRIRAKNHSSFVSEDLNSPQPPVPVDSDASAFSDSAVVEEVDSFVETEQEISVSTPPPPVTEETEVVAKEPPAPKKEPEVVVKKEPPKSVVSIKSNFGPTGKHINHLLAKTFKAPKKEDKPAPKEKTKTTQTKPQQSSDASNDKHHSPTNRTSQPFYRRDVSKKSGSDFRDRAKKDDNPKAFTGRDRYGLNDSSDDDKWRKKRVQKTKKHYEEHAIQRPTHIKVPLPITIKDLAAEMKLKASELIQKMFIHGMTYVVNDVLDNETTVQFIGLEFGCTIDIDSSEQDKLCIESNTVKEEIQETDPSKLITRPPIVAFMGHVDHGKTTLIDSLRKTNVAAVEAGAITQHMGAFCCSTPVGNLTILDTPGHEAFSAMRARGAEVCDIVVLVVAGDEGIKEQTLEAVKHARAANITIVVAINKCDKPNFNADTIYRQLAEIELLPEAWGGTTVTINTSAKTGEGLSELLEMLALQAEVLELKANPSARARGLVIESELHKGLGAVATILVQNGTLHLGEALVFNDCYGKVKTMHNEHNQLMKSASPSIPALITGLSSMPKAGDPFVVVKNEKTAKEIVGARLAGQQKFALQKKRPNFDAMLQNKKILKLIIKADVQGSIEALANSILKITSDKVSAEILANSVGEISESDIRLAAASKAVIIGFHTGIESHAESLIKNLGVKVQLFNIIYHAVDAVKEMMTALLDPIAEEKNLGSAEIKETFKSSQLGTIYGCLVSEGTMTRNQKVRVVRGNEIVWKGNLSSLKRIKEDVKEVKKGFECGILLEGCQHAQVGDILQCYEVIYHPQKL</sequence>
<name>IF2_CHLCV</name>
<protein>
    <recommendedName>
        <fullName evidence="2">Translation initiation factor IF-2</fullName>
    </recommendedName>
</protein>
<proteinExistence type="inferred from homology"/>
<dbReference type="EMBL" id="AE015925">
    <property type="protein sequence ID" value="AAP05210.1"/>
    <property type="molecule type" value="Genomic_DNA"/>
</dbReference>
<dbReference type="RefSeq" id="WP_011006426.1">
    <property type="nucleotide sequence ID" value="NC_003361.3"/>
</dbReference>
<dbReference type="SMR" id="Q823F2"/>
<dbReference type="STRING" id="227941.CCA_00465"/>
<dbReference type="KEGG" id="cca:CCA_00465"/>
<dbReference type="eggNOG" id="COG0532">
    <property type="taxonomic scope" value="Bacteria"/>
</dbReference>
<dbReference type="HOGENOM" id="CLU_006301_3_2_0"/>
<dbReference type="OrthoDB" id="9811804at2"/>
<dbReference type="Proteomes" id="UP000002193">
    <property type="component" value="Chromosome"/>
</dbReference>
<dbReference type="GO" id="GO:0005829">
    <property type="term" value="C:cytosol"/>
    <property type="evidence" value="ECO:0007669"/>
    <property type="project" value="TreeGrafter"/>
</dbReference>
<dbReference type="GO" id="GO:0005525">
    <property type="term" value="F:GTP binding"/>
    <property type="evidence" value="ECO:0007669"/>
    <property type="project" value="UniProtKB-KW"/>
</dbReference>
<dbReference type="GO" id="GO:0003924">
    <property type="term" value="F:GTPase activity"/>
    <property type="evidence" value="ECO:0007669"/>
    <property type="project" value="UniProtKB-UniRule"/>
</dbReference>
<dbReference type="GO" id="GO:0003743">
    <property type="term" value="F:translation initiation factor activity"/>
    <property type="evidence" value="ECO:0007669"/>
    <property type="project" value="UniProtKB-UniRule"/>
</dbReference>
<dbReference type="CDD" id="cd01887">
    <property type="entry name" value="IF2_eIF5B"/>
    <property type="match status" value="1"/>
</dbReference>
<dbReference type="CDD" id="cd03702">
    <property type="entry name" value="IF2_mtIF2_II"/>
    <property type="match status" value="1"/>
</dbReference>
<dbReference type="CDD" id="cd03692">
    <property type="entry name" value="mtIF2_IVc"/>
    <property type="match status" value="1"/>
</dbReference>
<dbReference type="FunFam" id="2.40.30.10:FF:000008">
    <property type="entry name" value="Translation initiation factor IF-2"/>
    <property type="match status" value="1"/>
</dbReference>
<dbReference type="FunFam" id="2.40.30.10:FF:000054">
    <property type="entry name" value="Translation initiation factor IF-2"/>
    <property type="match status" value="1"/>
</dbReference>
<dbReference type="FunFam" id="3.40.50.10050:FF:000001">
    <property type="entry name" value="Translation initiation factor IF-2"/>
    <property type="match status" value="1"/>
</dbReference>
<dbReference type="FunFam" id="3.40.50.300:FF:000019">
    <property type="entry name" value="Translation initiation factor IF-2"/>
    <property type="match status" value="1"/>
</dbReference>
<dbReference type="Gene3D" id="3.40.50.300">
    <property type="entry name" value="P-loop containing nucleotide triphosphate hydrolases"/>
    <property type="match status" value="1"/>
</dbReference>
<dbReference type="Gene3D" id="2.40.30.10">
    <property type="entry name" value="Translation factors"/>
    <property type="match status" value="2"/>
</dbReference>
<dbReference type="Gene3D" id="3.40.50.10050">
    <property type="entry name" value="Translation initiation factor IF- 2, domain 3"/>
    <property type="match status" value="1"/>
</dbReference>
<dbReference type="HAMAP" id="MF_00100_B">
    <property type="entry name" value="IF_2_B"/>
    <property type="match status" value="1"/>
</dbReference>
<dbReference type="InterPro" id="IPR053905">
    <property type="entry name" value="EF-G-like_DII"/>
</dbReference>
<dbReference type="InterPro" id="IPR004161">
    <property type="entry name" value="EFTu-like_2"/>
</dbReference>
<dbReference type="InterPro" id="IPR044145">
    <property type="entry name" value="IF2_II"/>
</dbReference>
<dbReference type="InterPro" id="IPR006847">
    <property type="entry name" value="IF2_N"/>
</dbReference>
<dbReference type="InterPro" id="IPR027417">
    <property type="entry name" value="P-loop_NTPase"/>
</dbReference>
<dbReference type="InterPro" id="IPR005225">
    <property type="entry name" value="Small_GTP-bd"/>
</dbReference>
<dbReference type="InterPro" id="IPR000795">
    <property type="entry name" value="T_Tr_GTP-bd_dom"/>
</dbReference>
<dbReference type="InterPro" id="IPR000178">
    <property type="entry name" value="TF_IF2_bacterial-like"/>
</dbReference>
<dbReference type="InterPro" id="IPR015760">
    <property type="entry name" value="TIF_IF2"/>
</dbReference>
<dbReference type="InterPro" id="IPR023115">
    <property type="entry name" value="TIF_IF2_dom3"/>
</dbReference>
<dbReference type="InterPro" id="IPR036925">
    <property type="entry name" value="TIF_IF2_dom3_sf"/>
</dbReference>
<dbReference type="InterPro" id="IPR009000">
    <property type="entry name" value="Transl_B-barrel_sf"/>
</dbReference>
<dbReference type="NCBIfam" id="TIGR00487">
    <property type="entry name" value="IF-2"/>
    <property type="match status" value="1"/>
</dbReference>
<dbReference type="NCBIfam" id="TIGR00231">
    <property type="entry name" value="small_GTP"/>
    <property type="match status" value="1"/>
</dbReference>
<dbReference type="PANTHER" id="PTHR43381:SF5">
    <property type="entry name" value="TR-TYPE G DOMAIN-CONTAINING PROTEIN"/>
    <property type="match status" value="1"/>
</dbReference>
<dbReference type="PANTHER" id="PTHR43381">
    <property type="entry name" value="TRANSLATION INITIATION FACTOR IF-2-RELATED"/>
    <property type="match status" value="1"/>
</dbReference>
<dbReference type="Pfam" id="PF22042">
    <property type="entry name" value="EF-G_D2"/>
    <property type="match status" value="1"/>
</dbReference>
<dbReference type="Pfam" id="PF00009">
    <property type="entry name" value="GTP_EFTU"/>
    <property type="match status" value="1"/>
</dbReference>
<dbReference type="Pfam" id="PF03144">
    <property type="entry name" value="GTP_EFTU_D2"/>
    <property type="match status" value="1"/>
</dbReference>
<dbReference type="Pfam" id="PF11987">
    <property type="entry name" value="IF-2"/>
    <property type="match status" value="1"/>
</dbReference>
<dbReference type="Pfam" id="PF04760">
    <property type="entry name" value="IF2_N"/>
    <property type="match status" value="1"/>
</dbReference>
<dbReference type="SUPFAM" id="SSF52156">
    <property type="entry name" value="Initiation factor IF2/eIF5b, domain 3"/>
    <property type="match status" value="1"/>
</dbReference>
<dbReference type="SUPFAM" id="SSF52540">
    <property type="entry name" value="P-loop containing nucleoside triphosphate hydrolases"/>
    <property type="match status" value="1"/>
</dbReference>
<dbReference type="SUPFAM" id="SSF50447">
    <property type="entry name" value="Translation proteins"/>
    <property type="match status" value="2"/>
</dbReference>
<dbReference type="PROSITE" id="PS51722">
    <property type="entry name" value="G_TR_2"/>
    <property type="match status" value="1"/>
</dbReference>
<dbReference type="PROSITE" id="PS01176">
    <property type="entry name" value="IF2"/>
    <property type="match status" value="1"/>
</dbReference>
<accession>Q823F2</accession>
<comment type="function">
    <text evidence="2">One of the essential components for the initiation of protein synthesis. Protects formylmethionyl-tRNA from spontaneous hydrolysis and promotes its binding to the 30S ribosomal subunits. Also involved in the hydrolysis of GTP during the formation of the 70S ribosomal complex.</text>
</comment>
<comment type="subcellular location">
    <subcellularLocation>
        <location evidence="2">Cytoplasm</location>
    </subcellularLocation>
</comment>
<comment type="similarity">
    <text evidence="2">Belongs to the TRAFAC class translation factor GTPase superfamily. Classic translation factor GTPase family. IF-2 subfamily.</text>
</comment>
<gene>
    <name evidence="2" type="primary">infB</name>
    <name type="ordered locus">CCA_00465</name>
</gene>
<keyword id="KW-0963">Cytoplasm</keyword>
<keyword id="KW-0342">GTP-binding</keyword>
<keyword id="KW-0396">Initiation factor</keyword>
<keyword id="KW-0547">Nucleotide-binding</keyword>
<keyword id="KW-0648">Protein biosynthesis</keyword>
<reference key="1">
    <citation type="journal article" date="2003" name="Nucleic Acids Res.">
        <title>Genome sequence of Chlamydophila caviae (Chlamydia psittaci GPIC): examining the role of niche-specific genes in the evolution of the Chlamydiaceae.</title>
        <authorList>
            <person name="Read T.D."/>
            <person name="Myers G.S.A."/>
            <person name="Brunham R.C."/>
            <person name="Nelson W.C."/>
            <person name="Paulsen I.T."/>
            <person name="Heidelberg J.F."/>
            <person name="Holtzapple E.K."/>
            <person name="Khouri H.M."/>
            <person name="Federova N.B."/>
            <person name="Carty H.A."/>
            <person name="Umayam L.A."/>
            <person name="Haft D.H."/>
            <person name="Peterson J.D."/>
            <person name="Beanan M.J."/>
            <person name="White O."/>
            <person name="Salzberg S.L."/>
            <person name="Hsia R.-C."/>
            <person name="McClarty G."/>
            <person name="Rank R.G."/>
            <person name="Bavoil P.M."/>
            <person name="Fraser C.M."/>
        </authorList>
    </citation>
    <scope>NUCLEOTIDE SEQUENCE [LARGE SCALE GENOMIC DNA]</scope>
    <source>
        <strain>ATCC VR-813 / DSM 19441 / 03DC25 / GPIC</strain>
    </source>
</reference>